<keyword id="KW-0067">ATP-binding</keyword>
<keyword id="KW-0968">Cytoplasmic vesicle</keyword>
<keyword id="KW-0967">Endosome</keyword>
<keyword id="KW-0418">Kinase</keyword>
<keyword id="KW-0449">Lipoprotein</keyword>
<keyword id="KW-0472">Membrane</keyword>
<keyword id="KW-0519">Myristate</keyword>
<keyword id="KW-0547">Nucleotide-binding</keyword>
<keyword id="KW-0597">Phosphoprotein</keyword>
<keyword id="KW-1185">Reference proteome</keyword>
<keyword id="KW-0677">Repeat</keyword>
<keyword id="KW-0723">Serine/threonine-protein kinase</keyword>
<keyword id="KW-0808">Transferase</keyword>
<keyword id="KW-0853">WD repeat</keyword>
<proteinExistence type="evidence at transcript level"/>
<accession>Q5R9I3</accession>
<protein>
    <recommendedName>
        <fullName>Phosphoinositide 3-kinase regulatory subunit 4</fullName>
        <shortName>PI3-kinase regulatory subunit 4</shortName>
        <ecNumber>2.7.11.1</ecNumber>
    </recommendedName>
</protein>
<comment type="function">
    <text evidence="3">Regulatory subunit of the PI3K complex that mediates formation of phosphatidylinositol 3-phosphate; different complex forms are believed to play a role in multiple membrane trafficking pathways: PI3KC3-C1 is involved in initiation of autophagosomes and PI3KC3-C2 in maturation of autophagosomes and endocytosis. Involved in regulation of degradative endocytic trafficking and cytokinesis, probably in the context of PI3KC3-C2 (By similarity).</text>
</comment>
<comment type="function">
    <text evidence="1">Regulatory subunit of the PI3K complex. May regulate membrane trafficking late in the endocytic pathway (By similarity).</text>
</comment>
<comment type="catalytic activity">
    <reaction>
        <text>L-seryl-[protein] + ATP = O-phospho-L-seryl-[protein] + ADP + H(+)</text>
        <dbReference type="Rhea" id="RHEA:17989"/>
        <dbReference type="Rhea" id="RHEA-COMP:9863"/>
        <dbReference type="Rhea" id="RHEA-COMP:11604"/>
        <dbReference type="ChEBI" id="CHEBI:15378"/>
        <dbReference type="ChEBI" id="CHEBI:29999"/>
        <dbReference type="ChEBI" id="CHEBI:30616"/>
        <dbReference type="ChEBI" id="CHEBI:83421"/>
        <dbReference type="ChEBI" id="CHEBI:456216"/>
        <dbReference type="EC" id="2.7.11.1"/>
    </reaction>
</comment>
<comment type="catalytic activity">
    <reaction>
        <text>L-threonyl-[protein] + ATP = O-phospho-L-threonyl-[protein] + ADP + H(+)</text>
        <dbReference type="Rhea" id="RHEA:46608"/>
        <dbReference type="Rhea" id="RHEA-COMP:11060"/>
        <dbReference type="Rhea" id="RHEA-COMP:11605"/>
        <dbReference type="ChEBI" id="CHEBI:15378"/>
        <dbReference type="ChEBI" id="CHEBI:30013"/>
        <dbReference type="ChEBI" id="CHEBI:30616"/>
        <dbReference type="ChEBI" id="CHEBI:61977"/>
        <dbReference type="ChEBI" id="CHEBI:456216"/>
        <dbReference type="EC" id="2.7.11.1"/>
    </reaction>
</comment>
<comment type="cofactor">
    <cofactor evidence="1">
        <name>Mn(2+)</name>
        <dbReference type="ChEBI" id="CHEBI:29035"/>
    </cofactor>
</comment>
<comment type="subunit">
    <text evidence="2 3">Component of the PI3K (PI3KC3/PI3K-III/class III phosphatidylinositol 3-kinase) complex the core of which is composed of the catalytic subunit PIK3C3, the regulatory subunit PIK3R4 and BECN1 associating with additional regulatory/auxiliary subunits to form alternative complex forms. Alternative complex forms containing a fourth regulatory subunit in a mutually exclusive manner are PI3K complex I (PI3KC3-C1) containing ATG14, and PI3K complex II (PI3KC3-C2) containing UVRAG. PI3KC3-C1 displays a V-shaped architecture with PIK3R4 serving as a bridge between PIK3C3 and the ATG14:BECN1 subcomplex. Both, PI3KC3-C1 and PI3KC3-C2, can associate with further regulatory subunits, such as RUBCN, SH3GLB1/Bif-1, AMBRA1 and NRBF2. PI3KC3-C1 probably associates with PIK3CB. Interacts with RAB7A in the presence of PIK3C3/VPS34. Interacts with NRBF2 (By similarity). Interacts with ARMC3 (By similarity).</text>
</comment>
<comment type="subcellular location">
    <subcellularLocation>
        <location evidence="1">Late endosome</location>
    </subcellularLocation>
    <subcellularLocation>
        <location evidence="7">Cytoplasmic vesicle</location>
        <location evidence="7">Autophagosome</location>
    </subcellularLocation>
    <subcellularLocation>
        <location evidence="3">Membrane</location>
        <topology evidence="3">Lipid-anchor</topology>
    </subcellularLocation>
    <text evidence="2 7">As component of the PI3K complex I localized to pre-autophagosome structures. As component of the PI3K complex II localized predominantly to endosomes. Localizes also to discrete punctae along the ciliary axoneme (By similarity).</text>
</comment>
<comment type="PTM">
    <text evidence="1">Myristoylated.</text>
</comment>
<comment type="PTM">
    <text evidence="1">Probably autophosphorylated.</text>
</comment>
<comment type="similarity">
    <text evidence="4">Belongs to the protein kinase superfamily. Ser/Thr protein kinase family.</text>
</comment>
<gene>
    <name type="primary">PIK3R4</name>
</gene>
<name>PI3R4_PONAB</name>
<sequence length="1358" mass="153183">MGNQLAGIAPSQILSVESYFSDIHDFEYDKSLGSTRFFKVARAKHREGLVVVKVFAIQDPTLPLTSYKQELEELKIRLNSAQNCLPFQKASEKASEKAAMLFRQYVRDNLYDRISTRPFLNNIENRWIAFQILTAVDQAHKPGVRHGDIKTENVMVTSWNWVLLTDFASFKPTYLPEDNPADFNYFFDTSRRRTCYIAPERFVDGGMFATELEYMRDPSTPLVDLNSNQRTRGELKRAMDIFSAGCVIAELFTEGVPLFDLSQLLAYRNGHFFPEQVLNKIEDHSIRELVTQMIHREPDKRLEAEDYLKQQRGNAFPEIFYTFLQPYMAQFAKETFLSADERILVIRKDLGNIIHNLCGHDLPEKTEEEPKENGLVILVSVITSCLQTLKYYDSKLAALELILHLAPRLGVEILLDRITPYLLHFSNDSVPRVRAEALRTLTKVLALVKEVPRNDINIYPEYILPGIAHLAQDDATIVRLAYAENIALLAETALRFLELVQLKNLNMENDPNNEEIDEVTHPNGNYDTELQALHEMVQQKVVTLLSDPENIVKQTLMENGITRLCVFFGRQKANDVLLSHMITFLNDKNDWHLRGAFFDSIVGVAAYVGWQSSSILKPLLQQGLSDAEEFVIVKALYALTCMCQLGLLQKPHVYEFASDIAPFLCHPNLWIRYGAVGFVTVVARQISTADVYCKLMPYLDPYITQPIIQIERKLVLLSVLKEPVSRSIFDYALRSKDITSLFRHLHMRQKKRNGSLPDCPPPEDPAIAQLLKKLLSQGMTEDEEDKLLALKDFMMKSNKAKANIVDQSHLHDSSQKGVIDLAALGITGRQVDLVKTKQEPDDKRARKHVKQDSNVNEEWKSMFGSLDPPNMPQALPKGSDQEVIQTGKPPRSESSAGICVPLSTSPQVPEVTTIQNKKPVIPVLSSTILPSTYQIRITTCKTELQQLIQQKREQCNAERIAKQMMENAEWESKPPPPGWRPKGLLVAHLHEHKSAVNRIRVSDEHSLFATCSNDGTVKIRNSQKMEGKTTTTRSILTYSRVGGRVKTLTFCQGSHYLAIASDNGAVQLLGIEASKLPKSPKIHPLQSRILDQKEDGCVVDMHHFNSGAQSVLAYATVNGSLVGWDLRSSSNAWTLKHDLKSGLITSFAVDIHQCWLCIGTSSGTMACWDMRFQLPISSHCHPSRARIRRLSMHPLYQSWVIAAVQGNNEVSMWDMETGDRRFTLWASSAPPLSELQPSPHSVHGIYCSPADGNPILLTAGSDMKIRFWDLAYPERSYVVAGSTSSPSVSYYRKIIEGTEVVQEIQNKQKVGPSDDTPRRGPESLPVGHHDIITDVATFQTTQGFIVTASRDGIVKVWK</sequence>
<organism>
    <name type="scientific">Pongo abelii</name>
    <name type="common">Sumatran orangutan</name>
    <name type="synonym">Pongo pygmaeus abelii</name>
    <dbReference type="NCBI Taxonomy" id="9601"/>
    <lineage>
        <taxon>Eukaryota</taxon>
        <taxon>Metazoa</taxon>
        <taxon>Chordata</taxon>
        <taxon>Craniata</taxon>
        <taxon>Vertebrata</taxon>
        <taxon>Euteleostomi</taxon>
        <taxon>Mammalia</taxon>
        <taxon>Eutheria</taxon>
        <taxon>Euarchontoglires</taxon>
        <taxon>Primates</taxon>
        <taxon>Haplorrhini</taxon>
        <taxon>Catarrhini</taxon>
        <taxon>Hominidae</taxon>
        <taxon>Pongo</taxon>
    </lineage>
</organism>
<evidence type="ECO:0000250" key="1"/>
<evidence type="ECO:0000250" key="2">
    <source>
        <dbReference type="UniProtKB" id="Q8VD65"/>
    </source>
</evidence>
<evidence type="ECO:0000250" key="3">
    <source>
        <dbReference type="UniProtKB" id="Q99570"/>
    </source>
</evidence>
<evidence type="ECO:0000255" key="4">
    <source>
        <dbReference type="PROSITE-ProRule" id="PRU00159"/>
    </source>
</evidence>
<evidence type="ECO:0000255" key="5">
    <source>
        <dbReference type="PROSITE-ProRule" id="PRU10027"/>
    </source>
</evidence>
<evidence type="ECO:0000256" key="6">
    <source>
        <dbReference type="SAM" id="MobiDB-lite"/>
    </source>
</evidence>
<evidence type="ECO:0000305" key="7"/>
<feature type="initiator methionine" description="Removed" evidence="3">
    <location>
        <position position="1"/>
    </location>
</feature>
<feature type="chain" id="PRO_0000086526" description="Phosphoinositide 3-kinase regulatory subunit 4">
    <location>
        <begin position="2"/>
        <end position="1358"/>
    </location>
</feature>
<feature type="domain" description="Protein kinase" evidence="4">
    <location>
        <begin position="26"/>
        <end position="324"/>
    </location>
</feature>
<feature type="repeat" description="HEAT 1">
    <location>
        <begin position="373"/>
        <end position="411"/>
    </location>
</feature>
<feature type="repeat" description="HEAT 2">
    <location>
        <begin position="413"/>
        <end position="450"/>
    </location>
</feature>
<feature type="repeat" description="HEAT 3">
    <location>
        <begin position="458"/>
        <end position="495"/>
    </location>
</feature>
<feature type="repeat" description="HEAT 4">
    <location>
        <begin position="531"/>
        <end position="570"/>
    </location>
</feature>
<feature type="repeat" description="HEAT 5">
    <location>
        <begin position="572"/>
        <end position="610"/>
    </location>
</feature>
<feature type="repeat" description="HEAT 6">
    <location>
        <begin position="612"/>
        <end position="648"/>
    </location>
</feature>
<feature type="repeat" description="HEAT 7">
    <location>
        <begin position="690"/>
        <end position="726"/>
    </location>
</feature>
<feature type="repeat" description="WD 1">
    <location>
        <begin position="991"/>
        <end position="1030"/>
    </location>
</feature>
<feature type="repeat" description="WD 2">
    <location>
        <begin position="1040"/>
        <end position="1079"/>
    </location>
</feature>
<feature type="repeat" description="WD 3">
    <location>
        <begin position="1093"/>
        <end position="1134"/>
    </location>
</feature>
<feature type="repeat" description="WD 4">
    <location>
        <begin position="1139"/>
        <end position="1178"/>
    </location>
</feature>
<feature type="repeat" description="WD 5">
    <location>
        <begin position="1182"/>
        <end position="1223"/>
    </location>
</feature>
<feature type="repeat" description="WD 6">
    <location>
        <begin position="1237"/>
        <end position="1278"/>
    </location>
</feature>
<feature type="repeat" description="WD 7">
    <location>
        <begin position="1327"/>
        <end position="1358"/>
    </location>
</feature>
<feature type="region of interest" description="Disordered" evidence="6">
    <location>
        <begin position="875"/>
        <end position="899"/>
    </location>
</feature>
<feature type="region of interest" description="Disordered" evidence="6">
    <location>
        <begin position="1307"/>
        <end position="1326"/>
    </location>
</feature>
<feature type="compositionally biased region" description="Basic and acidic residues" evidence="6">
    <location>
        <begin position="1315"/>
        <end position="1326"/>
    </location>
</feature>
<feature type="active site" description="Proton acceptor" evidence="4 5">
    <location>
        <position position="148"/>
    </location>
</feature>
<feature type="binding site" evidence="4">
    <location>
        <begin position="32"/>
        <end position="40"/>
    </location>
    <ligand>
        <name>ATP</name>
        <dbReference type="ChEBI" id="CHEBI:30616"/>
    </ligand>
</feature>
<feature type="binding site" evidence="4">
    <location>
        <position position="53"/>
    </location>
    <ligand>
        <name>ATP</name>
        <dbReference type="ChEBI" id="CHEBI:30616"/>
    </ligand>
</feature>
<feature type="modified residue" description="Phosphoserine" evidence="3">
    <location>
        <position position="808"/>
    </location>
</feature>
<feature type="modified residue" description="Phosphoserine" evidence="3">
    <location>
        <position position="813"/>
    </location>
</feature>
<feature type="modified residue" description="Phosphoserine" evidence="3">
    <location>
        <position position="853"/>
    </location>
</feature>
<feature type="modified residue" description="Phosphoserine" evidence="3">
    <location>
        <position position="865"/>
    </location>
</feature>
<feature type="modified residue" description="Phosphothreonine" evidence="3">
    <location>
        <position position="1316"/>
    </location>
</feature>
<feature type="lipid moiety-binding region" description="N-myristoyl glycine" evidence="3">
    <location>
        <position position="2"/>
    </location>
</feature>
<dbReference type="EC" id="2.7.11.1"/>
<dbReference type="EMBL" id="CR859405">
    <property type="protein sequence ID" value="CAH91577.1"/>
    <property type="molecule type" value="mRNA"/>
</dbReference>
<dbReference type="RefSeq" id="NP_001125926.1">
    <property type="nucleotide sequence ID" value="NM_001132454.1"/>
</dbReference>
<dbReference type="SMR" id="Q5R9I3"/>
<dbReference type="FunCoup" id="Q5R9I3">
    <property type="interactions" value="2984"/>
</dbReference>
<dbReference type="STRING" id="9601.ENSPPYP00000015770"/>
<dbReference type="GeneID" id="100172860"/>
<dbReference type="KEGG" id="pon:100172860"/>
<dbReference type="CTD" id="30849"/>
<dbReference type="eggNOG" id="KOG1240">
    <property type="taxonomic scope" value="Eukaryota"/>
</dbReference>
<dbReference type="InParanoid" id="Q5R9I3"/>
<dbReference type="OrthoDB" id="242910at2759"/>
<dbReference type="Proteomes" id="UP000001595">
    <property type="component" value="Unplaced"/>
</dbReference>
<dbReference type="GO" id="GO:0005776">
    <property type="term" value="C:autophagosome"/>
    <property type="evidence" value="ECO:0007669"/>
    <property type="project" value="UniProtKB-SubCell"/>
</dbReference>
<dbReference type="GO" id="GO:0005930">
    <property type="term" value="C:axoneme"/>
    <property type="evidence" value="ECO:0000250"/>
    <property type="project" value="UniProtKB"/>
</dbReference>
<dbReference type="GO" id="GO:0005770">
    <property type="term" value="C:late endosome"/>
    <property type="evidence" value="ECO:0000250"/>
    <property type="project" value="UniProtKB"/>
</dbReference>
<dbReference type="GO" id="GO:0071561">
    <property type="term" value="C:nucleus-vacuole junction"/>
    <property type="evidence" value="ECO:0007669"/>
    <property type="project" value="TreeGrafter"/>
</dbReference>
<dbReference type="GO" id="GO:0035032">
    <property type="term" value="C:phosphatidylinositol 3-kinase complex, class III"/>
    <property type="evidence" value="ECO:0000250"/>
    <property type="project" value="UniProtKB"/>
</dbReference>
<dbReference type="GO" id="GO:0034271">
    <property type="term" value="C:phosphatidylinositol 3-kinase complex, class III, type I"/>
    <property type="evidence" value="ECO:0007669"/>
    <property type="project" value="TreeGrafter"/>
</dbReference>
<dbReference type="GO" id="GO:0034272">
    <property type="term" value="C:phosphatidylinositol 3-kinase complex, class III, type II"/>
    <property type="evidence" value="ECO:0007669"/>
    <property type="project" value="TreeGrafter"/>
</dbReference>
<dbReference type="GO" id="GO:0005524">
    <property type="term" value="F:ATP binding"/>
    <property type="evidence" value="ECO:0007669"/>
    <property type="project" value="UniProtKB-KW"/>
</dbReference>
<dbReference type="GO" id="GO:0106310">
    <property type="term" value="F:protein serine kinase activity"/>
    <property type="evidence" value="ECO:0007669"/>
    <property type="project" value="RHEA"/>
</dbReference>
<dbReference type="GO" id="GO:0004674">
    <property type="term" value="F:protein serine/threonine kinase activity"/>
    <property type="evidence" value="ECO:0007669"/>
    <property type="project" value="UniProtKB-KW"/>
</dbReference>
<dbReference type="GO" id="GO:0042149">
    <property type="term" value="P:cellular response to glucose starvation"/>
    <property type="evidence" value="ECO:0000250"/>
    <property type="project" value="UniProtKB"/>
</dbReference>
<dbReference type="GO" id="GO:0045324">
    <property type="term" value="P:late endosome to vacuole transport"/>
    <property type="evidence" value="ECO:0007669"/>
    <property type="project" value="InterPro"/>
</dbReference>
<dbReference type="GO" id="GO:0016236">
    <property type="term" value="P:macroautophagy"/>
    <property type="evidence" value="ECO:0007669"/>
    <property type="project" value="InterPro"/>
</dbReference>
<dbReference type="GO" id="GO:0006623">
    <property type="term" value="P:protein targeting to vacuole"/>
    <property type="evidence" value="ECO:0007669"/>
    <property type="project" value="TreeGrafter"/>
</dbReference>
<dbReference type="CDD" id="cd13980">
    <property type="entry name" value="STKc_Vps15"/>
    <property type="match status" value="1"/>
</dbReference>
<dbReference type="FunFam" id="1.25.10.10:FF:000154">
    <property type="entry name" value="Phosphoinositide 3-kinase regulatory subunit 4"/>
    <property type="match status" value="1"/>
</dbReference>
<dbReference type="FunFam" id="1.10.510.10:FF:000305">
    <property type="entry name" value="phosphoinositide 3-kinase regulatory subunit 4"/>
    <property type="match status" value="1"/>
</dbReference>
<dbReference type="FunFam" id="1.25.10.10:FF:000100">
    <property type="entry name" value="phosphoinositide 3-kinase regulatory subunit 4"/>
    <property type="match status" value="1"/>
</dbReference>
<dbReference type="FunFam" id="2.130.10.10:FF:000396">
    <property type="entry name" value="phosphoinositide 3-kinase regulatory subunit 4"/>
    <property type="match status" value="1"/>
</dbReference>
<dbReference type="Gene3D" id="1.25.10.10">
    <property type="entry name" value="Leucine-rich Repeat Variant"/>
    <property type="match status" value="2"/>
</dbReference>
<dbReference type="Gene3D" id="1.10.510.10">
    <property type="entry name" value="Transferase(Phosphotransferase) domain 1"/>
    <property type="match status" value="1"/>
</dbReference>
<dbReference type="Gene3D" id="2.130.10.10">
    <property type="entry name" value="YVTN repeat-like/Quinoprotein amine dehydrogenase"/>
    <property type="match status" value="2"/>
</dbReference>
<dbReference type="InterPro" id="IPR011989">
    <property type="entry name" value="ARM-like"/>
</dbReference>
<dbReference type="InterPro" id="IPR016024">
    <property type="entry name" value="ARM-type_fold"/>
</dbReference>
<dbReference type="InterPro" id="IPR021133">
    <property type="entry name" value="HEAT_type_2"/>
</dbReference>
<dbReference type="InterPro" id="IPR011009">
    <property type="entry name" value="Kinase-like_dom_sf"/>
</dbReference>
<dbReference type="InterPro" id="IPR000719">
    <property type="entry name" value="Prot_kinase_dom"/>
</dbReference>
<dbReference type="InterPro" id="IPR008271">
    <property type="entry name" value="Ser/Thr_kinase_AS"/>
</dbReference>
<dbReference type="InterPro" id="IPR045162">
    <property type="entry name" value="Vps15-like"/>
</dbReference>
<dbReference type="InterPro" id="IPR055231">
    <property type="entry name" value="VPS15-like_hel"/>
</dbReference>
<dbReference type="InterPro" id="IPR015943">
    <property type="entry name" value="WD40/YVTN_repeat-like_dom_sf"/>
</dbReference>
<dbReference type="InterPro" id="IPR036322">
    <property type="entry name" value="WD40_repeat_dom_sf"/>
</dbReference>
<dbReference type="InterPro" id="IPR001680">
    <property type="entry name" value="WD40_rpt"/>
</dbReference>
<dbReference type="PANTHER" id="PTHR17583">
    <property type="entry name" value="PHOSPHOINOSITIDE 3-KINASE REGULATORY SUBUNIT 4"/>
    <property type="match status" value="1"/>
</dbReference>
<dbReference type="PANTHER" id="PTHR17583:SF0">
    <property type="entry name" value="PHOSPHOINOSITIDE 3-KINASE REGULATORY SUBUNIT 4"/>
    <property type="match status" value="1"/>
</dbReference>
<dbReference type="Pfam" id="PF00069">
    <property type="entry name" value="Pkinase"/>
    <property type="match status" value="1"/>
</dbReference>
<dbReference type="Pfam" id="PF22956">
    <property type="entry name" value="VPS15-like_hel"/>
    <property type="match status" value="1"/>
</dbReference>
<dbReference type="Pfam" id="PF00400">
    <property type="entry name" value="WD40"/>
    <property type="match status" value="2"/>
</dbReference>
<dbReference type="SMART" id="SM00220">
    <property type="entry name" value="S_TKc"/>
    <property type="match status" value="1"/>
</dbReference>
<dbReference type="SMART" id="SM00320">
    <property type="entry name" value="WD40"/>
    <property type="match status" value="6"/>
</dbReference>
<dbReference type="SUPFAM" id="SSF48371">
    <property type="entry name" value="ARM repeat"/>
    <property type="match status" value="1"/>
</dbReference>
<dbReference type="SUPFAM" id="SSF56112">
    <property type="entry name" value="Protein kinase-like (PK-like)"/>
    <property type="match status" value="1"/>
</dbReference>
<dbReference type="SUPFAM" id="SSF50978">
    <property type="entry name" value="WD40 repeat-like"/>
    <property type="match status" value="1"/>
</dbReference>
<dbReference type="PROSITE" id="PS50077">
    <property type="entry name" value="HEAT_REPEAT"/>
    <property type="match status" value="1"/>
</dbReference>
<dbReference type="PROSITE" id="PS50011">
    <property type="entry name" value="PROTEIN_KINASE_DOM"/>
    <property type="match status" value="1"/>
</dbReference>
<dbReference type="PROSITE" id="PS00108">
    <property type="entry name" value="PROTEIN_KINASE_ST"/>
    <property type="match status" value="1"/>
</dbReference>
<dbReference type="PROSITE" id="PS00678">
    <property type="entry name" value="WD_REPEATS_1"/>
    <property type="match status" value="2"/>
</dbReference>
<dbReference type="PROSITE" id="PS50082">
    <property type="entry name" value="WD_REPEATS_2"/>
    <property type="match status" value="2"/>
</dbReference>
<dbReference type="PROSITE" id="PS50294">
    <property type="entry name" value="WD_REPEATS_REGION"/>
    <property type="match status" value="2"/>
</dbReference>
<reference key="1">
    <citation type="submission" date="2004-11" db="EMBL/GenBank/DDBJ databases">
        <authorList>
            <consortium name="The German cDNA consortium"/>
        </authorList>
    </citation>
    <scope>NUCLEOTIDE SEQUENCE [LARGE SCALE MRNA]</scope>
    <source>
        <tissue>Kidney</tissue>
    </source>
</reference>